<feature type="chain" id="PRO_1000115453" description="ATP-dependent Clp protease adapter protein ClpS">
    <location>
        <begin position="1"/>
        <end position="99"/>
    </location>
</feature>
<name>CLPS_ACET2</name>
<proteinExistence type="inferred from homology"/>
<accession>A3DER9</accession>
<protein>
    <recommendedName>
        <fullName evidence="1">ATP-dependent Clp protease adapter protein ClpS</fullName>
    </recommendedName>
</protein>
<reference key="1">
    <citation type="submission" date="2007-02" db="EMBL/GenBank/DDBJ databases">
        <title>Complete sequence of Clostridium thermocellum ATCC 27405.</title>
        <authorList>
            <consortium name="US DOE Joint Genome Institute"/>
            <person name="Copeland A."/>
            <person name="Lucas S."/>
            <person name="Lapidus A."/>
            <person name="Barry K."/>
            <person name="Detter J.C."/>
            <person name="Glavina del Rio T."/>
            <person name="Hammon N."/>
            <person name="Israni S."/>
            <person name="Dalin E."/>
            <person name="Tice H."/>
            <person name="Pitluck S."/>
            <person name="Chertkov O."/>
            <person name="Brettin T."/>
            <person name="Bruce D."/>
            <person name="Han C."/>
            <person name="Tapia R."/>
            <person name="Gilna P."/>
            <person name="Schmutz J."/>
            <person name="Larimer F."/>
            <person name="Land M."/>
            <person name="Hauser L."/>
            <person name="Kyrpides N."/>
            <person name="Mikhailova N."/>
            <person name="Wu J.H.D."/>
            <person name="Newcomb M."/>
            <person name="Richardson P."/>
        </authorList>
    </citation>
    <scope>NUCLEOTIDE SEQUENCE [LARGE SCALE GENOMIC DNA]</scope>
    <source>
        <strain>ATCC 27405 / DSM 1237 / JCM 9322 / NBRC 103400 / NCIMB 10682 / NRRL B-4536 / VPI 7372</strain>
    </source>
</reference>
<keyword id="KW-1185">Reference proteome</keyword>
<organism>
    <name type="scientific">Acetivibrio thermocellus (strain ATCC 27405 / DSM 1237 / JCM 9322 / NBRC 103400 / NCIMB 10682 / NRRL B-4536 / VPI 7372)</name>
    <name type="common">Clostridium thermocellum</name>
    <dbReference type="NCBI Taxonomy" id="203119"/>
    <lineage>
        <taxon>Bacteria</taxon>
        <taxon>Bacillati</taxon>
        <taxon>Bacillota</taxon>
        <taxon>Clostridia</taxon>
        <taxon>Eubacteriales</taxon>
        <taxon>Oscillospiraceae</taxon>
        <taxon>Acetivibrio</taxon>
    </lineage>
</organism>
<sequence>MSEKTIVKKETNVDFKKPKMYKVILLNDDYTTMDFVVEILITVFHKTAADATRIMLDVHRKGKGVVGVYTYDIARSKIALVEKMAAEREFPLAAVMEPE</sequence>
<evidence type="ECO:0000255" key="1">
    <source>
        <dbReference type="HAMAP-Rule" id="MF_00302"/>
    </source>
</evidence>
<gene>
    <name evidence="1" type="primary">clpS</name>
    <name type="ordered locus">Cthe_1216</name>
</gene>
<comment type="function">
    <text evidence="1">Involved in the modulation of the specificity of the ClpAP-mediated ATP-dependent protein degradation.</text>
</comment>
<comment type="subunit">
    <text evidence="1">Binds to the N-terminal domain of the chaperone ClpA.</text>
</comment>
<comment type="similarity">
    <text evidence="1">Belongs to the ClpS family.</text>
</comment>
<dbReference type="EMBL" id="CP000568">
    <property type="protein sequence ID" value="ABN52448.1"/>
    <property type="molecule type" value="Genomic_DNA"/>
</dbReference>
<dbReference type="RefSeq" id="WP_003518883.1">
    <property type="nucleotide sequence ID" value="NC_009012.1"/>
</dbReference>
<dbReference type="SMR" id="A3DER9"/>
<dbReference type="STRING" id="203119.Cthe_1216"/>
<dbReference type="GeneID" id="35806087"/>
<dbReference type="KEGG" id="cth:Cthe_1216"/>
<dbReference type="eggNOG" id="COG2127">
    <property type="taxonomic scope" value="Bacteria"/>
</dbReference>
<dbReference type="HOGENOM" id="CLU_134358_1_0_9"/>
<dbReference type="OrthoDB" id="9796121at2"/>
<dbReference type="Proteomes" id="UP000002145">
    <property type="component" value="Chromosome"/>
</dbReference>
<dbReference type="GO" id="GO:0030163">
    <property type="term" value="P:protein catabolic process"/>
    <property type="evidence" value="ECO:0007669"/>
    <property type="project" value="InterPro"/>
</dbReference>
<dbReference type="GO" id="GO:0006508">
    <property type="term" value="P:proteolysis"/>
    <property type="evidence" value="ECO:0007669"/>
    <property type="project" value="UniProtKB-UniRule"/>
</dbReference>
<dbReference type="FunFam" id="3.30.1390.10:FF:000002">
    <property type="entry name" value="ATP-dependent Clp protease adapter protein ClpS"/>
    <property type="match status" value="1"/>
</dbReference>
<dbReference type="Gene3D" id="3.30.1390.10">
    <property type="match status" value="1"/>
</dbReference>
<dbReference type="HAMAP" id="MF_00302">
    <property type="entry name" value="ClpS"/>
    <property type="match status" value="1"/>
</dbReference>
<dbReference type="InterPro" id="IPR022935">
    <property type="entry name" value="ClpS"/>
</dbReference>
<dbReference type="InterPro" id="IPR003769">
    <property type="entry name" value="ClpS_core"/>
</dbReference>
<dbReference type="InterPro" id="IPR014719">
    <property type="entry name" value="Ribosomal_bL12_C/ClpS-like"/>
</dbReference>
<dbReference type="NCBIfam" id="NF000672">
    <property type="entry name" value="PRK00033.1-5"/>
    <property type="match status" value="1"/>
</dbReference>
<dbReference type="PANTHER" id="PTHR33473:SF19">
    <property type="entry name" value="ATP-DEPENDENT CLP PROTEASE ADAPTER PROTEIN CLPS"/>
    <property type="match status" value="1"/>
</dbReference>
<dbReference type="PANTHER" id="PTHR33473">
    <property type="entry name" value="ATP-DEPENDENT CLP PROTEASE ADAPTER PROTEIN CLPS1, CHLOROPLASTIC"/>
    <property type="match status" value="1"/>
</dbReference>
<dbReference type="Pfam" id="PF02617">
    <property type="entry name" value="ClpS"/>
    <property type="match status" value="1"/>
</dbReference>
<dbReference type="SUPFAM" id="SSF54736">
    <property type="entry name" value="ClpS-like"/>
    <property type="match status" value="1"/>
</dbReference>